<dbReference type="EMBL" id="CR858903">
    <property type="protein sequence ID" value="CAH91102.1"/>
    <property type="molecule type" value="mRNA"/>
</dbReference>
<dbReference type="RefSeq" id="NP_001125642.1">
    <property type="nucleotide sequence ID" value="NM_001132170.1"/>
</dbReference>
<dbReference type="SMR" id="Q5RAV8"/>
<dbReference type="FunCoup" id="Q5RAV8">
    <property type="interactions" value="884"/>
</dbReference>
<dbReference type="STRING" id="9601.ENSPPYP00000010562"/>
<dbReference type="GeneID" id="100172561"/>
<dbReference type="CTD" id="10226"/>
<dbReference type="eggNOG" id="ENOG502R7TG">
    <property type="taxonomic scope" value="Eukaryota"/>
</dbReference>
<dbReference type="InParanoid" id="Q5RAV8"/>
<dbReference type="OrthoDB" id="376826at2759"/>
<dbReference type="Proteomes" id="UP000001595">
    <property type="component" value="Unplaced"/>
</dbReference>
<dbReference type="GO" id="GO:0005829">
    <property type="term" value="C:cytosol"/>
    <property type="evidence" value="ECO:0007669"/>
    <property type="project" value="TreeGrafter"/>
</dbReference>
<dbReference type="GO" id="GO:0010008">
    <property type="term" value="C:endosome membrane"/>
    <property type="evidence" value="ECO:0007669"/>
    <property type="project" value="UniProtKB-SubCell"/>
</dbReference>
<dbReference type="GO" id="GO:0005811">
    <property type="term" value="C:lipid droplet"/>
    <property type="evidence" value="ECO:0000250"/>
    <property type="project" value="UniProtKB"/>
</dbReference>
<dbReference type="GO" id="GO:0042149">
    <property type="term" value="P:cellular response to glucose starvation"/>
    <property type="evidence" value="ECO:0000250"/>
    <property type="project" value="UniProtKB"/>
</dbReference>
<dbReference type="GO" id="GO:1905691">
    <property type="term" value="P:lipid droplet disassembly"/>
    <property type="evidence" value="ECO:0000250"/>
    <property type="project" value="UniProtKB"/>
</dbReference>
<dbReference type="GO" id="GO:0019915">
    <property type="term" value="P:lipid storage"/>
    <property type="evidence" value="ECO:0000250"/>
    <property type="project" value="UniProtKB"/>
</dbReference>
<dbReference type="GO" id="GO:0010890">
    <property type="term" value="P:positive regulation of triglyceride storage"/>
    <property type="evidence" value="ECO:0007669"/>
    <property type="project" value="TreeGrafter"/>
</dbReference>
<dbReference type="FunFam" id="1.20.120.340:FF:000016">
    <property type="entry name" value="Perilipin"/>
    <property type="match status" value="1"/>
</dbReference>
<dbReference type="Gene3D" id="1.20.120.340">
    <property type="entry name" value="Flagellar protein FliS"/>
    <property type="match status" value="1"/>
</dbReference>
<dbReference type="Gene3D" id="3.30.720.170">
    <property type="entry name" value="Perilipin, alpha-beta domain"/>
    <property type="match status" value="1"/>
</dbReference>
<dbReference type="InterPro" id="IPR004279">
    <property type="entry name" value="Perilipin"/>
</dbReference>
<dbReference type="PANTHER" id="PTHR14024">
    <property type="entry name" value="PERILIPIN"/>
    <property type="match status" value="1"/>
</dbReference>
<dbReference type="PANTHER" id="PTHR14024:SF11">
    <property type="entry name" value="PERILIPIN-3"/>
    <property type="match status" value="1"/>
</dbReference>
<dbReference type="Pfam" id="PF03036">
    <property type="entry name" value="Perilipin"/>
    <property type="match status" value="1"/>
</dbReference>
<dbReference type="PIRSF" id="PIRSF036881">
    <property type="entry name" value="PAT"/>
    <property type="match status" value="1"/>
</dbReference>
<dbReference type="SUPFAM" id="SSF109775">
    <property type="entry name" value="Mannose-6-phosphate receptor binding protein 1 (Tip47), C-terminal domain"/>
    <property type="match status" value="1"/>
</dbReference>
<gene>
    <name type="primary">PLIN3</name>
    <name type="synonym">M6PRBP1</name>
</gene>
<proteinExistence type="evidence at transcript level"/>
<accession>Q5RAV8</accession>
<organism>
    <name type="scientific">Pongo abelii</name>
    <name type="common">Sumatran orangutan</name>
    <name type="synonym">Pongo pygmaeus abelii</name>
    <dbReference type="NCBI Taxonomy" id="9601"/>
    <lineage>
        <taxon>Eukaryota</taxon>
        <taxon>Metazoa</taxon>
        <taxon>Chordata</taxon>
        <taxon>Craniata</taxon>
        <taxon>Vertebrata</taxon>
        <taxon>Euteleostomi</taxon>
        <taxon>Mammalia</taxon>
        <taxon>Eutheria</taxon>
        <taxon>Euarchontoglires</taxon>
        <taxon>Primates</taxon>
        <taxon>Haplorrhini</taxon>
        <taxon>Catarrhini</taxon>
        <taxon>Hominidae</taxon>
        <taxon>Pongo</taxon>
    </lineage>
</organism>
<name>PLIN3_PONAB</name>
<reference key="1">
    <citation type="submission" date="2004-11" db="EMBL/GenBank/DDBJ databases">
        <authorList>
            <consortium name="The German cDNA consortium"/>
        </authorList>
    </citation>
    <scope>NUCLEOTIDE SEQUENCE [LARGE SCALE MRNA]</scope>
    <source>
        <tissue>Heart</tissue>
    </source>
</reference>
<protein>
    <recommendedName>
        <fullName>Perilipin-3</fullName>
    </recommendedName>
    <alternativeName>
        <fullName>Mannose-6-phosphate receptor-binding protein 1</fullName>
    </alternativeName>
</protein>
<keyword id="KW-0007">Acetylation</keyword>
<keyword id="KW-0175">Coiled coil</keyword>
<keyword id="KW-0963">Cytoplasm</keyword>
<keyword id="KW-0967">Endosome</keyword>
<keyword id="KW-1017">Isopeptide bond</keyword>
<keyword id="KW-0551">Lipid droplet</keyword>
<keyword id="KW-0472">Membrane</keyword>
<keyword id="KW-0597">Phosphoprotein</keyword>
<keyword id="KW-1185">Reference proteome</keyword>
<keyword id="KW-0813">Transport</keyword>
<keyword id="KW-0832">Ubl conjugation</keyword>
<comment type="function">
    <text evidence="1">Structural component of lipid droplets, which is required for the formation and maintenance of lipid storage droplets. Required for the transport of mannose 6-phosphate receptors (MPR) from endosomes to the trans-Golgi network.</text>
</comment>
<comment type="subunit">
    <text evidence="1">Homooligomer. Interacts with M6PR (via the cytoplasmic domain). Interacts with IGF2R (via the cytoplasmic domain).</text>
</comment>
<comment type="subcellular location">
    <subcellularLocation>
        <location evidence="1">Lipid droplet</location>
    </subcellularLocation>
    <subcellularLocation>
        <location evidence="1">Endosome membrane</location>
        <topology evidence="1">Peripheral membrane protein</topology>
        <orientation evidence="1">Cytoplasmic side</orientation>
    </subcellularLocation>
    <subcellularLocation>
        <location evidence="1">Cytoplasm</location>
    </subcellularLocation>
    <text evidence="1">Membrane associated on endosomes. Detected in the envelope and the core of lipid bodies and in lipid sails.</text>
</comment>
<comment type="PTM">
    <text evidence="1">Phosphorylation at Tyr-251 by isoform 1 of CHKA (CHKalpha2) promotes dissociation from lipid droplets: dissociation is followed by recruitment of autophagosome machinery to lipid droplets and subsequent lipid droplet lipolysis.</text>
</comment>
<comment type="similarity">
    <text evidence="4">Belongs to the perilipin family.</text>
</comment>
<evidence type="ECO:0000250" key="1">
    <source>
        <dbReference type="UniProtKB" id="O60664"/>
    </source>
</evidence>
<evidence type="ECO:0000255" key="2"/>
<evidence type="ECO:0000256" key="3">
    <source>
        <dbReference type="SAM" id="MobiDB-lite"/>
    </source>
</evidence>
<evidence type="ECO:0000305" key="4"/>
<feature type="initiator methionine" description="Removed" evidence="1">
    <location>
        <position position="1"/>
    </location>
</feature>
<feature type="chain" id="PRO_0000099893" description="Perilipin-3">
    <location>
        <begin position="2"/>
        <end position="434"/>
    </location>
</feature>
<feature type="region of interest" description="Disordered" evidence="3">
    <location>
        <begin position="1"/>
        <end position="22"/>
    </location>
</feature>
<feature type="coiled-coil region" evidence="2">
    <location>
        <begin position="252"/>
        <end position="280"/>
    </location>
</feature>
<feature type="coiled-coil region" evidence="2">
    <location>
        <begin position="353"/>
        <end position="377"/>
    </location>
</feature>
<feature type="modified residue" description="N-acetylserine" evidence="1">
    <location>
        <position position="2"/>
    </location>
</feature>
<feature type="modified residue" description="Phosphoserine" evidence="1">
    <location>
        <position position="31"/>
    </location>
</feature>
<feature type="modified residue" description="N6-acetyllysine" evidence="1">
    <location>
        <position position="65"/>
    </location>
</feature>
<feature type="modified residue" description="Phosphoserine" evidence="1">
    <location>
        <position position="91"/>
    </location>
</feature>
<feature type="modified residue" description="Phosphoserine" evidence="1">
    <location>
        <position position="130"/>
    </location>
</feature>
<feature type="modified residue" description="Phosphoserine" evidence="1">
    <location>
        <position position="148"/>
    </location>
</feature>
<feature type="modified residue" description="Phosphothreonine" evidence="1">
    <location>
        <position position="170"/>
    </location>
</feature>
<feature type="modified residue" description="Phosphoserine" evidence="1">
    <location>
        <position position="175"/>
    </location>
</feature>
<feature type="modified residue" description="Phosphoserine" evidence="1">
    <location>
        <position position="179"/>
    </location>
</feature>
<feature type="modified residue" description="Phosphothreonine" evidence="1">
    <location>
        <position position="216"/>
    </location>
</feature>
<feature type="modified residue" description="Phosphoserine" evidence="1">
    <location>
        <position position="217"/>
    </location>
</feature>
<feature type="modified residue" description="Phosphoserine" evidence="1">
    <location>
        <position position="241"/>
    </location>
</feature>
<feature type="modified residue" description="Phosphotyrosine" evidence="1">
    <location>
        <position position="251"/>
    </location>
</feature>
<feature type="cross-link" description="Glycyl lysine isopeptide (Lys-Gly) (interchain with G-Cter in SUMO1)" evidence="1">
    <location>
        <position position="122"/>
    </location>
</feature>
<sequence length="434" mass="46990">MSADGAEADGSTQVTVEEPVQQPSVVDRVASMPLISSTCDMVSAAYASTKESYPHVKTVCDAAEKGVRTLTAAAVSGAQPILSKLEPQIASASEYAHRGLDKLEENLPILQQPTERVLADTKELVSSKVSGAQEMVSSAKDTVATQLSEAVDATRGAVQSGVDKTKSVVTGGVQSVMGSRLGQMVLSGVDTVLGKSGEWADNHLPLTDAELARIATSLDGFDVASVQQQRQEQSYFVRLGSLSERLRQHAYEHSLGKLRATKQRAQEALLQLSQALSLMETVKEGVDQKLVEGQEKLHQMWLSWNQKQLQGPEKEPPKPEQVESRALTMFRDIAQQLQATCTSLGSSIQGLPTNVKDQVQQARRQVEDLQATFSSIHSFQDLSSSILAQSRERVASAREALDHMVEYVAQNTPVTWLVGPFAPGITEKAPEEKK</sequence>